<gene>
    <name type="primary">vpu</name>
</gene>
<organismHost>
    <name type="scientific">Homo sapiens</name>
    <name type="common">Human</name>
    <dbReference type="NCBI Taxonomy" id="9606"/>
</organismHost>
<accession>P08804</accession>
<comment type="function">
    <text evidence="1">Enhances virion budding, by targeting human CD4 and Tetherin/BST2 to proteasome degradation. Degradation of CD4 prevents any unwanted premature interactions between viral Env and its receptor human CD4 in the endoplasmic reticulum. Degradation of antiretroviral protein Tetherin/BST2 is important for virion budding, as BST2 tethers new viral particles to the host cell membrane. Mechanistically, Vpu bridges either CD4 or BST2 to BTRC, a substrate recognition subunit of the Skp1/Cullin/F-box protein E3 ubiquitin ligase, induces their ubiquitination and subsequent proteasomal degradation. The alteration of the E3 ligase specificity by Vpu seems to interfere with the degradation of host IKBKB, leading to NF-kappa-B down-regulation and subsequent apoptosis. Acts as a viroporin that forms an oligomeric ion channel in membranes. Modulates the host DNA repair mechanisms to promote degradation of nuclear viral cDNA in cells that are already productively infected in order to suppress immune sensing and proviral hyper-integration (superinfection). Manipulates PML-NBs and modulates SUMOylation of host BLM protein thereby enhancing its DNA-end processing activity toward viral unintegrated linear DNA. Also inhibits RAD52-mediated homologous repair of viral cDNA, preventing the generation of dead-end circular forms of single copies of the long terminal repeat and permitting sustained nucleolytic attack.</text>
</comment>
<comment type="activity regulation">
    <text evidence="1">Ion channel activity is inhibited by hexamethylene amiloride in vitro.</text>
</comment>
<comment type="subunit">
    <text evidence="1">Homopentamer. Interacts with host CD4 and BRTC; these interactions induce proteasomal degradation of CD4. Interacts with host BST2; this interaction leads to the degradation of host BST2. Interacts with host FBXW11. Interacts with host AP1M1; this interaction plays a role in the mistrafficking and subsequent degradation of host BST2. Interacts with host RANBP2; this interaction allows Vpu to down-regulate host BLM sumoylation.</text>
</comment>
<comment type="subcellular location">
    <subcellularLocation>
        <location evidence="1">Host membrane</location>
        <topology evidence="1">Single-pass type I membrane protein</topology>
    </subcellularLocation>
</comment>
<comment type="domain">
    <text evidence="1">The N-terminus and transmembrane domains are required for self-oligomerization and proper virion budding, whereas the cytoplasmic domain is required for CD4 degradation. The cytoplasmic domain is composed of 2 amphipathic alpha helix that form a U-shape.</text>
</comment>
<comment type="PTM">
    <text evidence="1">Phosphorylated by host CK2. This phosphorylation is necessary for interaction with human BRCP and degradation of CD4 (By similarity).</text>
</comment>
<comment type="miscellaneous">
    <text>HIV-1 lineages are divided in three main groups, M (for Major), O (for Outlier), and N (for New, or Non-M, Non-O). The vast majority of strains found worldwide belong to the group M. Group O seems to be endemic to and largely confined to Cameroon and neighboring countries in West Central Africa, where these viruses represent a small minority of HIV-1 strains. The group N is represented by a limited number of isolates from Cameroonian persons. The group M is further subdivided in 9 clades or subtypes (A to D, F to H, J and K).</text>
</comment>
<comment type="similarity">
    <text evidence="3">Belongs to the HIV-1 VPU protein family.</text>
</comment>
<organism>
    <name type="scientific">Human immunodeficiency virus type 1 group M subtype B (isolate NY5)</name>
    <name type="common">HIV-1</name>
    <dbReference type="NCBI Taxonomy" id="11698"/>
    <lineage>
        <taxon>Viruses</taxon>
        <taxon>Riboviria</taxon>
        <taxon>Pararnavirae</taxon>
        <taxon>Artverviricota</taxon>
        <taxon>Revtraviricetes</taxon>
        <taxon>Ortervirales</taxon>
        <taxon>Retroviridae</taxon>
        <taxon>Orthoretrovirinae</taxon>
        <taxon>Lentivirus</taxon>
        <taxon>Human immunodeficiency virus type 1</taxon>
    </lineage>
</organism>
<protein>
    <recommendedName>
        <fullName>Protein Vpu</fullName>
    </recommendedName>
    <alternativeName>
        <fullName>U ORF protein</fullName>
    </alternativeName>
    <alternativeName>
        <fullName>Viral protein U</fullName>
    </alternativeName>
</protein>
<reference key="1">
    <citation type="journal article" date="1986" name="Proc. Natl. Acad. Sci. U.S.A.">
        <title>Identification of conserved and divergent domains within the envelope gene of the acquired immunodeficiency syndrome retrovirus.</title>
        <authorList>
            <person name="Willey R.W."/>
            <person name="Rutledge R.A."/>
            <person name="Dias S."/>
            <person name="Folks T."/>
            <person name="Theodore T."/>
            <person name="Buckler C.E."/>
            <person name="Martin M.A."/>
        </authorList>
    </citation>
    <scope>NUCLEOTIDE SEQUENCE [GENOMIC DNA]</scope>
</reference>
<name>VPU_HV1N5</name>
<dbReference type="EMBL" id="K03346">
    <property type="protein sequence ID" value="AAB02406.1"/>
    <property type="molecule type" value="Genomic_DNA"/>
</dbReference>
<dbReference type="GO" id="GO:0033644">
    <property type="term" value="C:host cell membrane"/>
    <property type="evidence" value="ECO:0007669"/>
    <property type="project" value="UniProtKB-SubCell"/>
</dbReference>
<dbReference type="GO" id="GO:0016020">
    <property type="term" value="C:membrane"/>
    <property type="evidence" value="ECO:0007669"/>
    <property type="project" value="UniProtKB-KW"/>
</dbReference>
<dbReference type="GO" id="GO:0042609">
    <property type="term" value="F:CD4 receptor binding"/>
    <property type="evidence" value="ECO:0007669"/>
    <property type="project" value="InterPro"/>
</dbReference>
<dbReference type="GO" id="GO:0005261">
    <property type="term" value="F:monoatomic cation channel activity"/>
    <property type="evidence" value="ECO:0007669"/>
    <property type="project" value="InterPro"/>
</dbReference>
<dbReference type="GO" id="GO:0032801">
    <property type="term" value="P:receptor catabolic process"/>
    <property type="evidence" value="ECO:0007669"/>
    <property type="project" value="InterPro"/>
</dbReference>
<dbReference type="GO" id="GO:0019076">
    <property type="term" value="P:viral release from host cell"/>
    <property type="evidence" value="ECO:0007669"/>
    <property type="project" value="InterPro"/>
</dbReference>
<dbReference type="Gene3D" id="1.10.195.10">
    <property type="entry name" value="HIV-1 VPU cytoplasmic domain"/>
    <property type="match status" value="1"/>
</dbReference>
<dbReference type="InterPro" id="IPR008187">
    <property type="entry name" value="Vpu"/>
</dbReference>
<dbReference type="InterPro" id="IPR009032">
    <property type="entry name" value="Vpu_cyt_dom_sf"/>
</dbReference>
<dbReference type="Pfam" id="PF00558">
    <property type="entry name" value="Vpu"/>
    <property type="match status" value="1"/>
</dbReference>
<dbReference type="SUPFAM" id="SSF57647">
    <property type="entry name" value="HIV-1 VPU cytoplasmic domain"/>
    <property type="match status" value="1"/>
</dbReference>
<sequence length="45" mass="5167">RKVDRIIDRIRERAEDSGNESEGDQEELSALVEMGHDAPWDVNDL</sequence>
<feature type="chain" id="PRO_0000085428" description="Protein Vpu">
    <location>
        <begin position="1" status="less than"/>
        <end position="45"/>
    </location>
</feature>
<feature type="region of interest" description="Disordered" evidence="2">
    <location>
        <begin position="1"/>
        <end position="45"/>
    </location>
</feature>
<feature type="compositionally biased region" description="Basic and acidic residues" evidence="2">
    <location>
        <begin position="1"/>
        <end position="16"/>
    </location>
</feature>
<feature type="compositionally biased region" description="Acidic residues" evidence="2">
    <location>
        <begin position="17"/>
        <end position="27"/>
    </location>
</feature>
<feature type="modified residue" description="Phosphoserine; by host CK2" evidence="1">
    <location>
        <position position="17"/>
    </location>
</feature>
<feature type="modified residue" description="Phosphoserine; by host CK2" evidence="1">
    <location>
        <position position="21"/>
    </location>
</feature>
<feature type="non-terminal residue">
    <location>
        <position position="1"/>
    </location>
</feature>
<keyword id="KW-0014">AIDS</keyword>
<keyword id="KW-0053">Apoptosis</keyword>
<keyword id="KW-1043">Host membrane</keyword>
<keyword id="KW-0945">Host-virus interaction</keyword>
<keyword id="KW-0407">Ion channel</keyword>
<keyword id="KW-0406">Ion transport</keyword>
<keyword id="KW-0472">Membrane</keyword>
<keyword id="KW-0597">Phosphoprotein</keyword>
<keyword id="KW-0812">Transmembrane</keyword>
<keyword id="KW-0813">Transport</keyword>
<evidence type="ECO:0000250" key="1"/>
<evidence type="ECO:0000256" key="2">
    <source>
        <dbReference type="SAM" id="MobiDB-lite"/>
    </source>
</evidence>
<evidence type="ECO:0000305" key="3"/>
<proteinExistence type="inferred from homology"/>